<protein>
    <recommendedName>
        <fullName>Olfactomedin-like protein 3</fullName>
    </recommendedName>
</protein>
<dbReference type="EMBL" id="AK002518">
    <property type="protein sequence ID" value="BAC24996.1"/>
    <property type="status" value="ALT_FRAME"/>
    <property type="molecule type" value="mRNA"/>
</dbReference>
<dbReference type="EMBL" id="AK076084">
    <property type="protein sequence ID" value="BAC36170.1"/>
    <property type="molecule type" value="mRNA"/>
</dbReference>
<dbReference type="EMBL" id="AK131879">
    <property type="protein sequence ID" value="BAE20846.1"/>
    <property type="molecule type" value="mRNA"/>
</dbReference>
<dbReference type="EMBL" id="CU210935">
    <property type="status" value="NOT_ANNOTATED_CDS"/>
    <property type="molecule type" value="Genomic_DNA"/>
</dbReference>
<dbReference type="EMBL" id="BC005485">
    <property type="protein sequence ID" value="AAH05485.1"/>
    <property type="molecule type" value="mRNA"/>
</dbReference>
<dbReference type="CCDS" id="CCDS17693.1"/>
<dbReference type="RefSeq" id="NP_598620.2">
    <property type="nucleotide sequence ID" value="NM_133859.2"/>
</dbReference>
<dbReference type="SMR" id="Q8BK62"/>
<dbReference type="BioGRID" id="221282">
    <property type="interactions" value="2"/>
</dbReference>
<dbReference type="FunCoup" id="Q8BK62">
    <property type="interactions" value="504"/>
</dbReference>
<dbReference type="STRING" id="10090.ENSMUSP00000029440"/>
<dbReference type="GlyCosmos" id="Q8BK62">
    <property type="glycosylation" value="2 sites, No reported glycans"/>
</dbReference>
<dbReference type="GlyGen" id="Q8BK62">
    <property type="glycosylation" value="2 sites, 1 N-linked glycan (1 site)"/>
</dbReference>
<dbReference type="iPTMnet" id="Q8BK62"/>
<dbReference type="PhosphoSitePlus" id="Q8BK62"/>
<dbReference type="CPTAC" id="non-CPTAC-3476"/>
<dbReference type="jPOST" id="Q8BK62"/>
<dbReference type="PaxDb" id="10090-ENSMUSP00000029440"/>
<dbReference type="PeptideAtlas" id="Q8BK62"/>
<dbReference type="ProteomicsDB" id="294197"/>
<dbReference type="Pumba" id="Q8BK62"/>
<dbReference type="GeneID" id="99543"/>
<dbReference type="KEGG" id="mmu:99543"/>
<dbReference type="UCSC" id="uc008qte.1">
    <property type="organism name" value="mouse"/>
</dbReference>
<dbReference type="AGR" id="MGI:1914877"/>
<dbReference type="CTD" id="56944"/>
<dbReference type="MGI" id="MGI:1914877">
    <property type="gene designation" value="Olfml3"/>
</dbReference>
<dbReference type="eggNOG" id="KOG3545">
    <property type="taxonomic scope" value="Eukaryota"/>
</dbReference>
<dbReference type="InParanoid" id="Q8BK62"/>
<dbReference type="OrthoDB" id="8626508at2759"/>
<dbReference type="PhylomeDB" id="Q8BK62"/>
<dbReference type="TreeFam" id="TF352000"/>
<dbReference type="BioGRID-ORCS" id="99543">
    <property type="hits" value="1 hit in 74 CRISPR screens"/>
</dbReference>
<dbReference type="ChiTaRS" id="Olfml3">
    <property type="organism name" value="mouse"/>
</dbReference>
<dbReference type="PRO" id="PR:Q8BK62"/>
<dbReference type="Proteomes" id="UP000000589">
    <property type="component" value="Unplaced"/>
</dbReference>
<dbReference type="RNAct" id="Q8BK62">
    <property type="molecule type" value="protein"/>
</dbReference>
<dbReference type="GO" id="GO:0005576">
    <property type="term" value="C:extracellular region"/>
    <property type="evidence" value="ECO:0007669"/>
    <property type="project" value="UniProtKB-SubCell"/>
</dbReference>
<dbReference type="InterPro" id="IPR003112">
    <property type="entry name" value="Olfac-like_dom"/>
</dbReference>
<dbReference type="InterPro" id="IPR050605">
    <property type="entry name" value="Olfactomedin-like_domain"/>
</dbReference>
<dbReference type="PANTHER" id="PTHR23192:SF8">
    <property type="entry name" value="OLFACTOMEDIN-LIKE PROTEIN 3"/>
    <property type="match status" value="1"/>
</dbReference>
<dbReference type="PANTHER" id="PTHR23192">
    <property type="entry name" value="OLFACTOMEDIN-RELATED"/>
    <property type="match status" value="1"/>
</dbReference>
<dbReference type="Pfam" id="PF02191">
    <property type="entry name" value="OLF"/>
    <property type="match status" value="1"/>
</dbReference>
<dbReference type="SMART" id="SM00284">
    <property type="entry name" value="OLF"/>
    <property type="match status" value="1"/>
</dbReference>
<dbReference type="PROSITE" id="PS51132">
    <property type="entry name" value="OLF"/>
    <property type="match status" value="1"/>
</dbReference>
<reference key="1">
    <citation type="journal article" date="2005" name="Science">
        <title>The transcriptional landscape of the mammalian genome.</title>
        <authorList>
            <person name="Carninci P."/>
            <person name="Kasukawa T."/>
            <person name="Katayama S."/>
            <person name="Gough J."/>
            <person name="Frith M.C."/>
            <person name="Maeda N."/>
            <person name="Oyama R."/>
            <person name="Ravasi T."/>
            <person name="Lenhard B."/>
            <person name="Wells C."/>
            <person name="Kodzius R."/>
            <person name="Shimokawa K."/>
            <person name="Bajic V.B."/>
            <person name="Brenner S.E."/>
            <person name="Batalov S."/>
            <person name="Forrest A.R."/>
            <person name="Zavolan M."/>
            <person name="Davis M.J."/>
            <person name="Wilming L.G."/>
            <person name="Aidinis V."/>
            <person name="Allen J.E."/>
            <person name="Ambesi-Impiombato A."/>
            <person name="Apweiler R."/>
            <person name="Aturaliya R.N."/>
            <person name="Bailey T.L."/>
            <person name="Bansal M."/>
            <person name="Baxter L."/>
            <person name="Beisel K.W."/>
            <person name="Bersano T."/>
            <person name="Bono H."/>
            <person name="Chalk A.M."/>
            <person name="Chiu K.P."/>
            <person name="Choudhary V."/>
            <person name="Christoffels A."/>
            <person name="Clutterbuck D.R."/>
            <person name="Crowe M.L."/>
            <person name="Dalla E."/>
            <person name="Dalrymple B.P."/>
            <person name="de Bono B."/>
            <person name="Della Gatta G."/>
            <person name="di Bernardo D."/>
            <person name="Down T."/>
            <person name="Engstrom P."/>
            <person name="Fagiolini M."/>
            <person name="Faulkner G."/>
            <person name="Fletcher C.F."/>
            <person name="Fukushima T."/>
            <person name="Furuno M."/>
            <person name="Futaki S."/>
            <person name="Gariboldi M."/>
            <person name="Georgii-Hemming P."/>
            <person name="Gingeras T.R."/>
            <person name="Gojobori T."/>
            <person name="Green R.E."/>
            <person name="Gustincich S."/>
            <person name="Harbers M."/>
            <person name="Hayashi Y."/>
            <person name="Hensch T.K."/>
            <person name="Hirokawa N."/>
            <person name="Hill D."/>
            <person name="Huminiecki L."/>
            <person name="Iacono M."/>
            <person name="Ikeo K."/>
            <person name="Iwama A."/>
            <person name="Ishikawa T."/>
            <person name="Jakt M."/>
            <person name="Kanapin A."/>
            <person name="Katoh M."/>
            <person name="Kawasawa Y."/>
            <person name="Kelso J."/>
            <person name="Kitamura H."/>
            <person name="Kitano H."/>
            <person name="Kollias G."/>
            <person name="Krishnan S.P."/>
            <person name="Kruger A."/>
            <person name="Kummerfeld S.K."/>
            <person name="Kurochkin I.V."/>
            <person name="Lareau L.F."/>
            <person name="Lazarevic D."/>
            <person name="Lipovich L."/>
            <person name="Liu J."/>
            <person name="Liuni S."/>
            <person name="McWilliam S."/>
            <person name="Madan Babu M."/>
            <person name="Madera M."/>
            <person name="Marchionni L."/>
            <person name="Matsuda H."/>
            <person name="Matsuzawa S."/>
            <person name="Miki H."/>
            <person name="Mignone F."/>
            <person name="Miyake S."/>
            <person name="Morris K."/>
            <person name="Mottagui-Tabar S."/>
            <person name="Mulder N."/>
            <person name="Nakano N."/>
            <person name="Nakauchi H."/>
            <person name="Ng P."/>
            <person name="Nilsson R."/>
            <person name="Nishiguchi S."/>
            <person name="Nishikawa S."/>
            <person name="Nori F."/>
            <person name="Ohara O."/>
            <person name="Okazaki Y."/>
            <person name="Orlando V."/>
            <person name="Pang K.C."/>
            <person name="Pavan W.J."/>
            <person name="Pavesi G."/>
            <person name="Pesole G."/>
            <person name="Petrovsky N."/>
            <person name="Piazza S."/>
            <person name="Reed J."/>
            <person name="Reid J.F."/>
            <person name="Ring B.Z."/>
            <person name="Ringwald M."/>
            <person name="Rost B."/>
            <person name="Ruan Y."/>
            <person name="Salzberg S.L."/>
            <person name="Sandelin A."/>
            <person name="Schneider C."/>
            <person name="Schoenbach C."/>
            <person name="Sekiguchi K."/>
            <person name="Semple C.A."/>
            <person name="Seno S."/>
            <person name="Sessa L."/>
            <person name="Sheng Y."/>
            <person name="Shibata Y."/>
            <person name="Shimada H."/>
            <person name="Shimada K."/>
            <person name="Silva D."/>
            <person name="Sinclair B."/>
            <person name="Sperling S."/>
            <person name="Stupka E."/>
            <person name="Sugiura K."/>
            <person name="Sultana R."/>
            <person name="Takenaka Y."/>
            <person name="Taki K."/>
            <person name="Tammoja K."/>
            <person name="Tan S.L."/>
            <person name="Tang S."/>
            <person name="Taylor M.S."/>
            <person name="Tegner J."/>
            <person name="Teichmann S.A."/>
            <person name="Ueda H.R."/>
            <person name="van Nimwegen E."/>
            <person name="Verardo R."/>
            <person name="Wei C.L."/>
            <person name="Yagi K."/>
            <person name="Yamanishi H."/>
            <person name="Zabarovsky E."/>
            <person name="Zhu S."/>
            <person name="Zimmer A."/>
            <person name="Hide W."/>
            <person name="Bult C."/>
            <person name="Grimmond S.M."/>
            <person name="Teasdale R.D."/>
            <person name="Liu E.T."/>
            <person name="Brusic V."/>
            <person name="Quackenbush J."/>
            <person name="Wahlestedt C."/>
            <person name="Mattick J.S."/>
            <person name="Hume D.A."/>
            <person name="Kai C."/>
            <person name="Sasaki D."/>
            <person name="Tomaru Y."/>
            <person name="Fukuda S."/>
            <person name="Kanamori-Katayama M."/>
            <person name="Suzuki M."/>
            <person name="Aoki J."/>
            <person name="Arakawa T."/>
            <person name="Iida J."/>
            <person name="Imamura K."/>
            <person name="Itoh M."/>
            <person name="Kato T."/>
            <person name="Kawaji H."/>
            <person name="Kawagashira N."/>
            <person name="Kawashima T."/>
            <person name="Kojima M."/>
            <person name="Kondo S."/>
            <person name="Konno H."/>
            <person name="Nakano K."/>
            <person name="Ninomiya N."/>
            <person name="Nishio T."/>
            <person name="Okada M."/>
            <person name="Plessy C."/>
            <person name="Shibata K."/>
            <person name="Shiraki T."/>
            <person name="Suzuki S."/>
            <person name="Tagami M."/>
            <person name="Waki K."/>
            <person name="Watahiki A."/>
            <person name="Okamura-Oho Y."/>
            <person name="Suzuki H."/>
            <person name="Kawai J."/>
            <person name="Hayashizaki Y."/>
        </authorList>
    </citation>
    <scope>NUCLEOTIDE SEQUENCE [LARGE SCALE MRNA]</scope>
    <source>
        <strain>C57BL/6J</strain>
        <tissue>Embryo</tissue>
        <tissue>Kidney</tissue>
        <tissue>Stomach</tissue>
    </source>
</reference>
<reference key="2">
    <citation type="journal article" date="2009" name="PLoS Biol.">
        <title>Lineage-specific biology revealed by a finished genome assembly of the mouse.</title>
        <authorList>
            <person name="Church D.M."/>
            <person name="Goodstadt L."/>
            <person name="Hillier L.W."/>
            <person name="Zody M.C."/>
            <person name="Goldstein S."/>
            <person name="She X."/>
            <person name="Bult C.J."/>
            <person name="Agarwala R."/>
            <person name="Cherry J.L."/>
            <person name="DiCuccio M."/>
            <person name="Hlavina W."/>
            <person name="Kapustin Y."/>
            <person name="Meric P."/>
            <person name="Maglott D."/>
            <person name="Birtle Z."/>
            <person name="Marques A.C."/>
            <person name="Graves T."/>
            <person name="Zhou S."/>
            <person name="Teague B."/>
            <person name="Potamousis K."/>
            <person name="Churas C."/>
            <person name="Place M."/>
            <person name="Herschleb J."/>
            <person name="Runnheim R."/>
            <person name="Forrest D."/>
            <person name="Amos-Landgraf J."/>
            <person name="Schwartz D.C."/>
            <person name="Cheng Z."/>
            <person name="Lindblad-Toh K."/>
            <person name="Eichler E.E."/>
            <person name="Ponting C.P."/>
        </authorList>
    </citation>
    <scope>NUCLEOTIDE SEQUENCE [LARGE SCALE GENOMIC DNA]</scope>
    <source>
        <strain>C57BL/6J</strain>
    </source>
</reference>
<reference key="3">
    <citation type="journal article" date="2004" name="Genome Res.">
        <title>The status, quality, and expansion of the NIH full-length cDNA project: the Mammalian Gene Collection (MGC).</title>
        <authorList>
            <consortium name="The MGC Project Team"/>
        </authorList>
    </citation>
    <scope>NUCLEOTIDE SEQUENCE [LARGE SCALE MRNA]</scope>
    <source>
        <strain>FVB/N</strain>
        <tissue>Mammary tumor</tissue>
    </source>
</reference>
<proteinExistence type="evidence at transcript level"/>
<accession>Q8BK62</accession>
<accession>A9R9W9</accession>
<accession>Q3V2F2</accession>
<accession>Q8C1T0</accession>
<accession>Q99K37</accession>
<sequence length="406" mass="45746">MGPSAPLLLLFFLSWTGPLQGQQHHLVEYMERRLAALEERLAQCQDQSSRLAAELRDFKNKMLPLLEVAEKERETLRTEADSISGRVDRLEREVDYLETQNPALPCVELDEKVTGGPGAKGKGRRNEKYDMVTDCSYTVAQVRSMKILKRFGGSAGLWTKDPLGPAEKIYVLDGTQNDTAFVFPRLRDFTLAMAARKASRIRVPFPWVGTGQLVYGGFLYYARRPPGGPGGGGELENTLQLIKFHLANRTVVDSSVFPAESLIPPYGLTADTYIDLAADEEGLWAVYATRDDDRHLCLAKLDPQTLDTEQQWDTPCPRENAEAAFVICGTLYVVYNTRPASRARIQCSFDASGTLAPERAALSYFPRRYGAHASLRYNPRERQLYAWDDGYQIVYKLEMKKKEEEV</sequence>
<evidence type="ECO:0000250" key="1"/>
<evidence type="ECO:0000255" key="2"/>
<evidence type="ECO:0000255" key="3">
    <source>
        <dbReference type="PROSITE-ProRule" id="PRU00446"/>
    </source>
</evidence>
<evidence type="ECO:0000305" key="4"/>
<name>OLFL3_MOUSE</name>
<organism>
    <name type="scientific">Mus musculus</name>
    <name type="common">Mouse</name>
    <dbReference type="NCBI Taxonomy" id="10090"/>
    <lineage>
        <taxon>Eukaryota</taxon>
        <taxon>Metazoa</taxon>
        <taxon>Chordata</taxon>
        <taxon>Craniata</taxon>
        <taxon>Vertebrata</taxon>
        <taxon>Euteleostomi</taxon>
        <taxon>Mammalia</taxon>
        <taxon>Eutheria</taxon>
        <taxon>Euarchontoglires</taxon>
        <taxon>Glires</taxon>
        <taxon>Rodentia</taxon>
        <taxon>Myomorpha</taxon>
        <taxon>Muroidea</taxon>
        <taxon>Muridae</taxon>
        <taxon>Murinae</taxon>
        <taxon>Mus</taxon>
        <taxon>Mus</taxon>
    </lineage>
</organism>
<keyword id="KW-0175">Coiled coil</keyword>
<keyword id="KW-0217">Developmental protein</keyword>
<keyword id="KW-1015">Disulfide bond</keyword>
<keyword id="KW-0325">Glycoprotein</keyword>
<keyword id="KW-1185">Reference proteome</keyword>
<keyword id="KW-0964">Secreted</keyword>
<keyword id="KW-0732">Signal</keyword>
<gene>
    <name type="primary">Olfml3</name>
</gene>
<comment type="function">
    <text evidence="1">Secreted scaffold protein that plays an essential role in dorsoventral patterning during early development. Stabilizes axial formation by restricting chordin (CHRD) activity on the dorsal side. Acts by facilitating the association between the tolloid proteases and their substrate chordin (CHRD), leading to enhance chordin (CHRD) degradation (By similarity). May have matrix-related function involved in placental and embryonic development, or play a similar role in other physiological processes (By similarity).</text>
</comment>
<comment type="subcellular location">
    <subcellularLocation>
        <location evidence="1">Secreted</location>
    </subcellularLocation>
</comment>
<comment type="similarity">
    <text evidence="4">Belongs to the OLFML3 family.</text>
</comment>
<comment type="sequence caution" evidence="4">
    <conflict type="frameshift">
        <sequence resource="EMBL-CDS" id="BAC24996"/>
    </conflict>
</comment>
<feature type="signal peptide" evidence="2">
    <location>
        <begin position="1"/>
        <end position="21"/>
    </location>
</feature>
<feature type="chain" id="PRO_0000020093" description="Olfactomedin-like protein 3">
    <location>
        <begin position="22"/>
        <end position="406"/>
    </location>
</feature>
<feature type="domain" description="Olfactomedin-like" evidence="3">
    <location>
        <begin position="134"/>
        <end position="401"/>
    </location>
</feature>
<feature type="coiled-coil region" evidence="2">
    <location>
        <begin position="25"/>
        <end position="101"/>
    </location>
</feature>
<feature type="glycosylation site" description="N-linked (GlcNAc...) asparagine" evidence="2">
    <location>
        <position position="177"/>
    </location>
</feature>
<feature type="glycosylation site" description="N-linked (GlcNAc...) asparagine" evidence="2">
    <location>
        <position position="248"/>
    </location>
</feature>
<feature type="disulfide bond" evidence="3">
    <location>
        <begin position="135"/>
        <end position="328"/>
    </location>
</feature>
<feature type="sequence conflict" description="In Ref. 1; BAC24996/BAC36170/BAE20846 and 3; AAH05485." evidence="4" ref="1 3">
    <original>L</original>
    <variation>H</variation>
    <location>
        <position position="51"/>
    </location>
</feature>
<feature type="sequence conflict" description="In Ref. 1; BAC24996/BAC36170/BAE20846." evidence="4" ref="1">
    <original>A</original>
    <variation>V</variation>
    <location>
        <position position="155"/>
    </location>
</feature>